<proteinExistence type="inferred from homology"/>
<dbReference type="EC" id="2.3.1.108" evidence="1"/>
<dbReference type="EMBL" id="AAKM01000007">
    <property type="protein sequence ID" value="EDL45055.1"/>
    <property type="molecule type" value="Genomic_DNA"/>
</dbReference>
<dbReference type="RefSeq" id="XP_001614782.1">
    <property type="nucleotide sequence ID" value="XM_001614732.1"/>
</dbReference>
<dbReference type="SMR" id="A5K6W4"/>
<dbReference type="EnsemblProtists" id="EDL45055">
    <property type="protein sequence ID" value="EDL45055"/>
    <property type="gene ID" value="PVX_099660"/>
</dbReference>
<dbReference type="GeneID" id="5474073"/>
<dbReference type="KEGG" id="pvx:PVX_099660"/>
<dbReference type="VEuPathDB" id="PlasmoDB:PVX_099660"/>
<dbReference type="InParanoid" id="A5K6W4"/>
<dbReference type="OMA" id="IKQPNNF"/>
<dbReference type="PhylomeDB" id="A5K6W4"/>
<dbReference type="Proteomes" id="UP000008333">
    <property type="component" value="Chromosome 7"/>
</dbReference>
<dbReference type="GO" id="GO:0005874">
    <property type="term" value="C:microtubule"/>
    <property type="evidence" value="ECO:0007669"/>
    <property type="project" value="InterPro"/>
</dbReference>
<dbReference type="GO" id="GO:0019799">
    <property type="term" value="F:tubulin N-acetyltransferase activity"/>
    <property type="evidence" value="ECO:0007669"/>
    <property type="project" value="UniProtKB-UniRule"/>
</dbReference>
<dbReference type="GO" id="GO:0070507">
    <property type="term" value="P:regulation of microtubule cytoskeleton organization"/>
    <property type="evidence" value="ECO:0007669"/>
    <property type="project" value="UniProtKB-UniRule"/>
</dbReference>
<dbReference type="CDD" id="cd04301">
    <property type="entry name" value="NAT_SF"/>
    <property type="match status" value="1"/>
</dbReference>
<dbReference type="Gene3D" id="3.40.630.30">
    <property type="match status" value="1"/>
</dbReference>
<dbReference type="HAMAP" id="MF_03130">
    <property type="entry name" value="mec17"/>
    <property type="match status" value="1"/>
</dbReference>
<dbReference type="InterPro" id="IPR016181">
    <property type="entry name" value="Acyl_CoA_acyltransferase"/>
</dbReference>
<dbReference type="InterPro" id="IPR038746">
    <property type="entry name" value="Atat"/>
</dbReference>
<dbReference type="InterPro" id="IPR007965">
    <property type="entry name" value="GNAT_ATAT"/>
</dbReference>
<dbReference type="PANTHER" id="PTHR12327">
    <property type="entry name" value="ALPHA-TUBULIN N-ACETYLTRANSFERASE 1"/>
    <property type="match status" value="1"/>
</dbReference>
<dbReference type="PANTHER" id="PTHR12327:SF0">
    <property type="entry name" value="ALPHA-TUBULIN N-ACETYLTRANSFERASE 1"/>
    <property type="match status" value="1"/>
</dbReference>
<dbReference type="Pfam" id="PF05301">
    <property type="entry name" value="Acetyltransf_16"/>
    <property type="match status" value="1"/>
</dbReference>
<dbReference type="SUPFAM" id="SSF55729">
    <property type="entry name" value="Acyl-CoA N-acyltransferases (Nat)"/>
    <property type="match status" value="1"/>
</dbReference>
<dbReference type="PROSITE" id="PS51730">
    <property type="entry name" value="GNAT_ATAT"/>
    <property type="match status" value="1"/>
</dbReference>
<organism>
    <name type="scientific">Plasmodium vivax (strain Salvador I)</name>
    <dbReference type="NCBI Taxonomy" id="126793"/>
    <lineage>
        <taxon>Eukaryota</taxon>
        <taxon>Sar</taxon>
        <taxon>Alveolata</taxon>
        <taxon>Apicomplexa</taxon>
        <taxon>Aconoidasida</taxon>
        <taxon>Haemosporida</taxon>
        <taxon>Plasmodiidae</taxon>
        <taxon>Plasmodium</taxon>
        <taxon>Plasmodium (Plasmodium)</taxon>
    </lineage>
</organism>
<accession>A5K6W4</accession>
<evidence type="ECO:0000255" key="1">
    <source>
        <dbReference type="HAMAP-Rule" id="MF_03130"/>
    </source>
</evidence>
<feature type="chain" id="PRO_0000402080" description="Alpha-tubulin N-acetyltransferase">
    <location>
        <begin position="1"/>
        <end position="184"/>
    </location>
</feature>
<feature type="domain" description="N-acetyltransferase" evidence="1">
    <location>
        <begin position="1"/>
        <end position="174"/>
    </location>
</feature>
<feature type="binding site" evidence="1">
    <location>
        <begin position="108"/>
        <end position="121"/>
    </location>
    <ligand>
        <name>acetyl-CoA</name>
        <dbReference type="ChEBI" id="CHEBI:57288"/>
    </ligand>
</feature>
<feature type="binding site" evidence="1">
    <location>
        <begin position="144"/>
        <end position="153"/>
    </location>
    <ligand>
        <name>acetyl-CoA</name>
        <dbReference type="ChEBI" id="CHEBI:57288"/>
    </ligand>
</feature>
<feature type="site" description="Crucial for catalytic activity" evidence="1">
    <location>
        <position position="50"/>
    </location>
</feature>
<comment type="function">
    <text evidence="1">Specifically acetylates 'Lys-40' in alpha-tubulin on the lumenal side of microtubules. Promotes microtubule destabilization and accelerates microtubule dynamics; this activity may be independent of acetylation activity. Acetylates alpha-tubulin with a slow enzymatic rate, due to a catalytic site that is not optimized for acetyl transfer. Enters the microtubule through each end and diffuses quickly throughout the lumen of microtubules. Acetylates only long/old microtubules because of its slow acetylation rate since it does not have time to act on dynamically unstable microtubules before the enzyme is released.</text>
</comment>
<comment type="catalytic activity">
    <reaction evidence="1">
        <text>L-lysyl-[alpha-tubulin] + acetyl-CoA = N(6)-acetyl-L-lysyl-[alpha-tubulin] + CoA + H(+)</text>
        <dbReference type="Rhea" id="RHEA:15277"/>
        <dbReference type="Rhea" id="RHEA-COMP:11278"/>
        <dbReference type="Rhea" id="RHEA-COMP:11279"/>
        <dbReference type="ChEBI" id="CHEBI:15378"/>
        <dbReference type="ChEBI" id="CHEBI:29969"/>
        <dbReference type="ChEBI" id="CHEBI:57287"/>
        <dbReference type="ChEBI" id="CHEBI:57288"/>
        <dbReference type="ChEBI" id="CHEBI:61930"/>
        <dbReference type="EC" id="2.3.1.108"/>
    </reaction>
</comment>
<comment type="similarity">
    <text evidence="1">Belongs to the acetyltransferase ATAT1 family.</text>
</comment>
<reference key="1">
    <citation type="journal article" date="2008" name="Nature">
        <title>Comparative genomics of the neglected human malaria parasite Plasmodium vivax.</title>
        <authorList>
            <person name="Carlton J.M."/>
            <person name="Adams J.H."/>
            <person name="Silva J.C."/>
            <person name="Bidwell S.L."/>
            <person name="Lorenzi H."/>
            <person name="Caler E."/>
            <person name="Crabtree J."/>
            <person name="Angiuoli S.V."/>
            <person name="Merino E.F."/>
            <person name="Amedeo P."/>
            <person name="Cheng Q."/>
            <person name="Coulson R.M.R."/>
            <person name="Crabb B.S."/>
            <person name="del Portillo H.A."/>
            <person name="Essien K."/>
            <person name="Feldblyum T.V."/>
            <person name="Fernandez-Becerra C."/>
            <person name="Gilson P.R."/>
            <person name="Gueye A.H."/>
            <person name="Guo X."/>
            <person name="Kang'a S."/>
            <person name="Kooij T.W.A."/>
            <person name="Korsinczky M."/>
            <person name="Meyer E.V.-S."/>
            <person name="Nene V."/>
            <person name="Paulsen I."/>
            <person name="White O."/>
            <person name="Ralph S.A."/>
            <person name="Ren Q."/>
            <person name="Sargeant T.J."/>
            <person name="Salzberg S.L."/>
            <person name="Stoeckert C.J."/>
            <person name="Sullivan S.A."/>
            <person name="Yamamoto M.M."/>
            <person name="Hoffman S.L."/>
            <person name="Wortman J.R."/>
            <person name="Gardner M.J."/>
            <person name="Galinski M.R."/>
            <person name="Barnwell J.W."/>
            <person name="Fraser-Liggett C.M."/>
        </authorList>
    </citation>
    <scope>NUCLEOTIDE SEQUENCE [LARGE SCALE GENOMIC DNA]</scope>
    <source>
        <strain>Salvador I</strain>
    </source>
</reference>
<protein>
    <recommendedName>
        <fullName evidence="1">Alpha-tubulin N-acetyltransferase</fullName>
        <shortName evidence="1">Alpha-TAT</shortName>
        <shortName evidence="1">TAT</shortName>
        <ecNumber evidence="1">2.3.1.108</ecNumber>
    </recommendedName>
    <alternativeName>
        <fullName evidence="1">Acetyltransferase mec-17 homolog</fullName>
    </alternativeName>
</protein>
<keyword id="KW-0012">Acyltransferase</keyword>
<keyword id="KW-1185">Reference proteome</keyword>
<keyword id="KW-0808">Transferase</keyword>
<gene>
    <name type="ORF">PVX_099660</name>
</gene>
<sequence length="184" mass="21358">MDTHGEKMKNLEIKKHSRGDLLLLRSSDLHSFRKLQREVDKMGLLSSAEQHLSGILTTLENVADQDNTLYCLTQRGELIGMLKIGTKRLYLYNGKDLHCRSCACLLDFYIRRDFRKRGLGLELFNFMLRDKAISPSRLCYDNPSHKLRSFLKKHFSPCALIKQPNNFVIFAEYFGEPEAAPFER</sequence>
<name>ATAT_PLAVS</name>